<reference key="1">
    <citation type="journal article" date="2007" name="J. Bacteriol.">
        <title>The genome sequence of avian pathogenic Escherichia coli strain O1:K1:H7 shares strong similarities with human extraintestinal pathogenic E. coli genomes.</title>
        <authorList>
            <person name="Johnson T.J."/>
            <person name="Kariyawasam S."/>
            <person name="Wannemuehler Y."/>
            <person name="Mangiamele P."/>
            <person name="Johnson S.J."/>
            <person name="Doetkott C."/>
            <person name="Skyberg J.A."/>
            <person name="Lynne A.M."/>
            <person name="Johnson J.R."/>
            <person name="Nolan L.K."/>
        </authorList>
    </citation>
    <scope>NUCLEOTIDE SEQUENCE [LARGE SCALE GENOMIC DNA]</scope>
</reference>
<keyword id="KW-0223">Dioxygenase</keyword>
<keyword id="KW-0408">Iron</keyword>
<keyword id="KW-0479">Metal-binding</keyword>
<keyword id="KW-0560">Oxidoreductase</keyword>
<keyword id="KW-1185">Reference proteome</keyword>
<name>GLAH_ECOK1</name>
<accession>A1AEK4</accession>
<organism>
    <name type="scientific">Escherichia coli O1:K1 / APEC</name>
    <dbReference type="NCBI Taxonomy" id="405955"/>
    <lineage>
        <taxon>Bacteria</taxon>
        <taxon>Pseudomonadati</taxon>
        <taxon>Pseudomonadota</taxon>
        <taxon>Gammaproteobacteria</taxon>
        <taxon>Enterobacterales</taxon>
        <taxon>Enterobacteriaceae</taxon>
        <taxon>Escherichia</taxon>
    </lineage>
</organism>
<gene>
    <name evidence="1" type="primary">glaH</name>
    <name type="ordered locus">Ecok1_26000</name>
    <name type="ORF">APECO1_3861</name>
</gene>
<dbReference type="EC" id="1.14.11.64" evidence="1"/>
<dbReference type="EMBL" id="CP000468">
    <property type="protein sequence ID" value="ABJ02094.1"/>
    <property type="molecule type" value="Genomic_DNA"/>
</dbReference>
<dbReference type="RefSeq" id="WP_000993117.1">
    <property type="nucleotide sequence ID" value="NZ_CADILS010000021.1"/>
</dbReference>
<dbReference type="SMR" id="A1AEK4"/>
<dbReference type="KEGG" id="ecv:APECO1_3861"/>
<dbReference type="HOGENOM" id="CLU_075277_0_0_6"/>
<dbReference type="Proteomes" id="UP000008216">
    <property type="component" value="Chromosome"/>
</dbReference>
<dbReference type="GO" id="GO:0008198">
    <property type="term" value="F:ferrous iron binding"/>
    <property type="evidence" value="ECO:0007669"/>
    <property type="project" value="UniProtKB-UniRule"/>
</dbReference>
<dbReference type="GO" id="GO:0106343">
    <property type="term" value="F:glutarate dioxygenase activity"/>
    <property type="evidence" value="ECO:0007669"/>
    <property type="project" value="UniProtKB-EC"/>
</dbReference>
<dbReference type="GO" id="GO:0050498">
    <property type="term" value="F:oxidoreductase activity, acting on paired donors, with incorporation or reduction of molecular oxygen, with 2-oxoglutarate as one donor, and the other dehydrogenated"/>
    <property type="evidence" value="ECO:0007669"/>
    <property type="project" value="UniProtKB-UniRule"/>
</dbReference>
<dbReference type="GO" id="GO:0019477">
    <property type="term" value="P:L-lysine catabolic process"/>
    <property type="evidence" value="ECO:0007669"/>
    <property type="project" value="UniProtKB-UniRule"/>
</dbReference>
<dbReference type="CDD" id="cd00250">
    <property type="entry name" value="CAS_like"/>
    <property type="match status" value="1"/>
</dbReference>
<dbReference type="FunFam" id="3.60.130.10:FF:000004">
    <property type="entry name" value="Glutarate 2-hydroxylase"/>
    <property type="match status" value="1"/>
</dbReference>
<dbReference type="Gene3D" id="3.60.130.10">
    <property type="entry name" value="Clavaminate synthase-like"/>
    <property type="match status" value="1"/>
</dbReference>
<dbReference type="HAMAP" id="MF_01083">
    <property type="entry name" value="glutarate_hydroxylase"/>
    <property type="match status" value="1"/>
</dbReference>
<dbReference type="InterPro" id="IPR015038">
    <property type="entry name" value="GlaH"/>
</dbReference>
<dbReference type="InterPro" id="IPR042098">
    <property type="entry name" value="TauD-like_sf"/>
</dbReference>
<dbReference type="NCBIfam" id="NF002814">
    <property type="entry name" value="PRK02963.1"/>
    <property type="match status" value="1"/>
</dbReference>
<dbReference type="Pfam" id="PF08943">
    <property type="entry name" value="CsiD"/>
    <property type="match status" value="1"/>
</dbReference>
<dbReference type="SUPFAM" id="SSF51197">
    <property type="entry name" value="Clavaminate synthase-like"/>
    <property type="match status" value="1"/>
</dbReference>
<protein>
    <recommendedName>
        <fullName evidence="1">Glutarate 2-hydroxylase</fullName>
        <shortName evidence="1">G-2-H</shortName>
        <ecNumber evidence="1">1.14.11.64</ecNumber>
    </recommendedName>
</protein>
<evidence type="ECO:0000255" key="1">
    <source>
        <dbReference type="HAMAP-Rule" id="MF_01083"/>
    </source>
</evidence>
<comment type="function">
    <text evidence="1">Acts as an alpha-ketoglutarate-dependent dioxygenase catalyzing hydroxylation of glutarate (GA) to L-2-hydroxyglutarate (L2HG). Functions in a L-lysine degradation pathway that proceeds via cadaverine, glutarate and L-2-hydroxyglutarate.</text>
</comment>
<comment type="catalytic activity">
    <reaction evidence="1">
        <text>glutarate + 2-oxoglutarate + O2 = (S)-2-hydroxyglutarate + succinate + CO2</text>
        <dbReference type="Rhea" id="RHEA:13821"/>
        <dbReference type="ChEBI" id="CHEBI:15379"/>
        <dbReference type="ChEBI" id="CHEBI:16526"/>
        <dbReference type="ChEBI" id="CHEBI:16782"/>
        <dbReference type="ChEBI" id="CHEBI:16810"/>
        <dbReference type="ChEBI" id="CHEBI:30031"/>
        <dbReference type="ChEBI" id="CHEBI:30921"/>
        <dbReference type="EC" id="1.14.11.64"/>
    </reaction>
    <physiologicalReaction direction="left-to-right" evidence="1">
        <dbReference type="Rhea" id="RHEA:13822"/>
    </physiologicalReaction>
</comment>
<comment type="cofactor">
    <cofactor evidence="1">
        <name>Fe(2+)</name>
        <dbReference type="ChEBI" id="CHEBI:29033"/>
    </cofactor>
    <text evidence="1">Binds 1 Fe(2+) ion per subunit.</text>
</comment>
<comment type="pathway">
    <text evidence="1">Amino-acid degradation.</text>
</comment>
<comment type="subunit">
    <text evidence="1">Homotetramer.</text>
</comment>
<comment type="similarity">
    <text evidence="1">Belongs to the glutarate hydroxylase family.</text>
</comment>
<sequence>MNALTAVQNNAVDSGQDYSGFTLIPSAQSPRLLELTFTEQTTNRFLEQVAEWPVQALEYKSFLRFRVGKILDDLCANQLQPLLLKTLLNRAEGALLINAVGIDDVAQADEMVKLATAVAHLIGRSNFDAMSGQYYARFVVKNVDNSDSYLRQPHRVMELHNDGTYVEEITDYVLMMKIDEQNMQGGNSLLLHLDDWEHLDHFFRHPLARRPMRFAAPPSKNVSKDVFHPVFDVDQQGRPVMRYIDQFVQPKDFEEGVWLSELSDAIETSKGILSVPVPVGKFLLINNLFWLHGRDRFTPHPDLRRELMRQRGYFAYATHHYQTHQ</sequence>
<feature type="chain" id="PRO_1000064808" description="Glutarate 2-hydroxylase">
    <location>
        <begin position="1"/>
        <end position="325"/>
    </location>
</feature>
<feature type="binding site" evidence="1">
    <location>
        <position position="160"/>
    </location>
    <ligand>
        <name>Fe cation</name>
        <dbReference type="ChEBI" id="CHEBI:24875"/>
    </ligand>
</feature>
<feature type="binding site" evidence="1">
    <location>
        <position position="162"/>
    </location>
    <ligand>
        <name>Fe cation</name>
        <dbReference type="ChEBI" id="CHEBI:24875"/>
    </ligand>
</feature>
<feature type="binding site" evidence="1">
    <location>
        <position position="292"/>
    </location>
    <ligand>
        <name>Fe cation</name>
        <dbReference type="ChEBI" id="CHEBI:24875"/>
    </ligand>
</feature>
<proteinExistence type="inferred from homology"/>